<accession>I3R9Z4</accession>
<accession>B3FRM5</accession>
<evidence type="ECO:0000250" key="1"/>
<evidence type="ECO:0000255" key="2"/>
<evidence type="ECO:0000256" key="3">
    <source>
        <dbReference type="SAM" id="MobiDB-lite"/>
    </source>
</evidence>
<evidence type="ECO:0000269" key="4">
    <source>
    </source>
</evidence>
<evidence type="ECO:0000305" key="5"/>
<name>PHAC_HALMT</name>
<organism>
    <name type="scientific">Haloferax mediterranei (strain ATCC 33500 / DSM 1411 / JCM 8866 / NBRC 14739 / NCIMB 2177 / R-4)</name>
    <name type="common">Halobacterium mediterranei</name>
    <dbReference type="NCBI Taxonomy" id="523841"/>
    <lineage>
        <taxon>Archaea</taxon>
        <taxon>Methanobacteriati</taxon>
        <taxon>Methanobacteriota</taxon>
        <taxon>Stenosarchaea group</taxon>
        <taxon>Halobacteria</taxon>
        <taxon>Halobacteriales</taxon>
        <taxon>Haloferacaceae</taxon>
        <taxon>Haloferax</taxon>
    </lineage>
</organism>
<gene>
    <name type="primary">phaC</name>
    <name type="ordered locus">HFX_5221</name>
    <name type="ORF">C439_00140</name>
</gene>
<keyword id="KW-0012">Acyltransferase</keyword>
<keyword id="KW-0577">PHA biosynthesis</keyword>
<keyword id="KW-0583">PHB biosynthesis</keyword>
<keyword id="KW-0614">Plasmid</keyword>
<keyword id="KW-0808">Transferase</keyword>
<proteinExistence type="evidence at protein level"/>
<dbReference type="EC" id="2.3.1.-"/>
<dbReference type="EMBL" id="EU374220">
    <property type="protein sequence ID" value="ACB10370.1"/>
    <property type="molecule type" value="Genomic_DNA"/>
</dbReference>
<dbReference type="EMBL" id="CP001870">
    <property type="protein sequence ID" value="AFK21054.1"/>
    <property type="molecule type" value="Genomic_DNA"/>
</dbReference>
<dbReference type="EMBL" id="AOLO01000001">
    <property type="protein sequence ID" value="EMA05161.1"/>
    <property type="molecule type" value="Genomic_DNA"/>
</dbReference>
<dbReference type="RefSeq" id="WP_004056138.1">
    <property type="nucleotide sequence ID" value="NC_017943.1"/>
</dbReference>
<dbReference type="SMR" id="I3R9Z4"/>
<dbReference type="ESTHER" id="halme-b3frm5">
    <property type="family name" value="PHA_synth_III_C"/>
</dbReference>
<dbReference type="GeneID" id="40158350"/>
<dbReference type="KEGG" id="hme:HFX_5221"/>
<dbReference type="HOGENOM" id="CLU_035017_2_0_2"/>
<dbReference type="OrthoDB" id="202878at2157"/>
<dbReference type="BRENDA" id="2.3.1.304">
    <property type="organism ID" value="2566"/>
</dbReference>
<dbReference type="UniPathway" id="UPA00917"/>
<dbReference type="Proteomes" id="UP000006469">
    <property type="component" value="Plasmid pHM300"/>
</dbReference>
<dbReference type="Proteomes" id="UP000011603">
    <property type="component" value="Unassembled WGS sequence"/>
</dbReference>
<dbReference type="GO" id="GO:0016746">
    <property type="term" value="F:acyltransferase activity"/>
    <property type="evidence" value="ECO:0007669"/>
    <property type="project" value="UniProtKB-KW"/>
</dbReference>
<dbReference type="GO" id="GO:0000166">
    <property type="term" value="F:nucleotide binding"/>
    <property type="evidence" value="ECO:0007669"/>
    <property type="project" value="InterPro"/>
</dbReference>
<dbReference type="GO" id="GO:0042621">
    <property type="term" value="P:poly(3-hydroxyalkanoate) biosynthetic process"/>
    <property type="evidence" value="ECO:0007669"/>
    <property type="project" value="UniProtKB-KW"/>
</dbReference>
<dbReference type="GO" id="GO:0042619">
    <property type="term" value="P:poly-hydroxybutyrate biosynthetic process"/>
    <property type="evidence" value="ECO:0007669"/>
    <property type="project" value="UniProtKB-KW"/>
</dbReference>
<dbReference type="Gene3D" id="1.10.150.20">
    <property type="entry name" value="5' to 3' exonuclease, C-terminal subdomain"/>
    <property type="match status" value="1"/>
</dbReference>
<dbReference type="Gene3D" id="3.40.50.1820">
    <property type="entry name" value="alpha/beta hydrolase"/>
    <property type="match status" value="1"/>
</dbReference>
<dbReference type="InterPro" id="IPR000073">
    <property type="entry name" value="AB_hydrolase_1"/>
</dbReference>
<dbReference type="InterPro" id="IPR029058">
    <property type="entry name" value="AB_hydrolase_fold"/>
</dbReference>
<dbReference type="InterPro" id="IPR010995">
    <property type="entry name" value="DNA_repair_Rad51/TF_NusA_a-hlx"/>
</dbReference>
<dbReference type="InterPro" id="IPR051321">
    <property type="entry name" value="PHA/PHB_synthase"/>
</dbReference>
<dbReference type="InterPro" id="IPR010125">
    <property type="entry name" value="PHA_synth_III_C"/>
</dbReference>
<dbReference type="NCBIfam" id="TIGR01836">
    <property type="entry name" value="PHA_synth_III_C"/>
    <property type="match status" value="1"/>
</dbReference>
<dbReference type="PANTHER" id="PTHR36837">
    <property type="entry name" value="POLY(3-HYDROXYALKANOATE) POLYMERASE SUBUNIT PHAC"/>
    <property type="match status" value="1"/>
</dbReference>
<dbReference type="PANTHER" id="PTHR36837:SF2">
    <property type="entry name" value="POLY(3-HYDROXYALKANOATE) POLYMERASE SUBUNIT PHAC"/>
    <property type="match status" value="1"/>
</dbReference>
<dbReference type="Pfam" id="PF00561">
    <property type="entry name" value="Abhydrolase_1"/>
    <property type="match status" value="1"/>
</dbReference>
<dbReference type="Pfam" id="PF14520">
    <property type="entry name" value="HHH_5"/>
    <property type="match status" value="1"/>
</dbReference>
<dbReference type="SUPFAM" id="SSF53474">
    <property type="entry name" value="alpha/beta-Hydrolases"/>
    <property type="match status" value="1"/>
</dbReference>
<dbReference type="SUPFAM" id="SSF47794">
    <property type="entry name" value="Rad51 N-terminal domain-like"/>
    <property type="match status" value="1"/>
</dbReference>
<reference key="1">
    <citation type="journal article" date="2008" name="J. Bacteriol.">
        <title>Genetic and biochemical characterization of the poly(3-hydroxybutyrate-co-3-hydroxyvalerate) synthase in Haloferax mediterranei.</title>
        <authorList>
            <person name="Lu Q."/>
            <person name="Han J."/>
            <person name="Zhou L."/>
            <person name="Zhou J."/>
            <person name="Xiang H."/>
        </authorList>
    </citation>
    <scope>NUCLEOTIDE SEQUENCE [GENOMIC DNA]</scope>
    <scope>FUNCTION</scope>
    <scope>DISRUPTION PHENOTYPE</scope>
    <source>
        <strain>ATCC 33500 / DSM 1411 / JCM 8866 / NBRC 14739 / NCIMB 2177 / R-4</strain>
        <plasmid>pHM300</plasmid>
    </source>
</reference>
<reference key="2">
    <citation type="journal article" date="2012" name="J. Bacteriol.">
        <title>Complete genome sequence of the metabolically versatile halophilic archaeon Haloferax mediterranei, a poly(3-hydroxybutyrate-co-3-hydroxyvalerate) producer.</title>
        <authorList>
            <person name="Han J."/>
            <person name="Zhang F."/>
            <person name="Hou J."/>
            <person name="Liu X."/>
            <person name="Li M."/>
            <person name="Liu H."/>
            <person name="Cai L."/>
            <person name="Zhang B."/>
            <person name="Chen Y."/>
            <person name="Zhou J."/>
            <person name="Hu S."/>
            <person name="Xiang H."/>
        </authorList>
    </citation>
    <scope>NUCLEOTIDE SEQUENCE [LARGE SCALE GENOMIC DNA]</scope>
    <source>
        <strain>ATCC 33500 / DSM 1411 / JCM 8866 / NBRC 14739 / NCIMB 2177 / R-4</strain>
        <plasmid>pHM300</plasmid>
    </source>
</reference>
<reference key="3">
    <citation type="journal article" date="2014" name="PLoS Genet.">
        <title>Phylogenetically driven sequencing of extremely halophilic archaea reveals strategies for static and dynamic osmo-response.</title>
        <authorList>
            <person name="Becker E.A."/>
            <person name="Seitzer P.M."/>
            <person name="Tritt A."/>
            <person name="Larsen D."/>
            <person name="Krusor M."/>
            <person name="Yao A.I."/>
            <person name="Wu D."/>
            <person name="Madern D."/>
            <person name="Eisen J.A."/>
            <person name="Darling A.E."/>
            <person name="Facciotti M.T."/>
        </authorList>
    </citation>
    <scope>NUCLEOTIDE SEQUENCE [LARGE SCALE GENOMIC DNA]</scope>
    <source>
        <strain>ATCC 33500 / DSM 1411 / JCM 8866 / NBRC 14739 / NCIMB 2177 / R-4</strain>
        <plasmid>pHM300</plasmid>
    </source>
</reference>
<protein>
    <recommendedName>
        <fullName>Poly(3-hydroxyalkanoate) polymerase subunit PhaC</fullName>
        <shortName>PHA polymerase</shortName>
        <ecNumber>2.3.1.-</ecNumber>
    </recommendedName>
    <alternativeName>
        <fullName>PHB synthase subunit PhaC</fullName>
    </alternativeName>
    <alternativeName>
        <fullName>Poly(3-hydroxybutyrate) polymerase subunit PhaC</fullName>
        <shortName>PHB polymerase</shortName>
    </alternativeName>
    <alternativeName>
        <fullName>Polyhydroxyalkanoic acid synthase subunit PhaC</fullName>
        <shortName>PHA synthase</shortName>
    </alternativeName>
</protein>
<comment type="function">
    <text evidence="4">Involved in the production of polyhydroxyalkonic acids (PHAs), which are water-insoluble biopolymers used as intracellular energy reserve material when cells grow under conditions of nutrient limitation. PHAs are composed primarily of 3-hydroxybutyric acid (3HB) and 3-hydroxyvaleric acid (3HV). Required for the production of poly-beta-hydroxybutyrate (PHB) and poly(beta-hydroxybutyrate-co-beta-hydroxyvalerate) (PHBV).</text>
</comment>
<comment type="pathway">
    <text>Biopolymer metabolism; poly-(R)-3-hydroxybutanoate biosynthesis.</text>
</comment>
<comment type="subunit">
    <text evidence="1">Heterodimer with PhaE.</text>
</comment>
<comment type="disruption phenotype">
    <text evidence="4">Depletion of both phaC and phaE genes leads to complete loss of PHA synthase activity and PHBV production.</text>
</comment>
<comment type="biotechnology">
    <text>PHB and PHBV are desirable bioplastic due to their biodegradability, biocompatibility, and mechanical properties. However, PHBV has better mechanical properties than PHB.</text>
</comment>
<comment type="similarity">
    <text evidence="5">Belongs to the PHA/PHB synthase family.</text>
</comment>
<geneLocation type="plasmid">
    <name>pHM300</name>
</geneLocation>
<feature type="chain" id="PRO_0000428871" description="Poly(3-hydroxyalkanoate) polymerase subunit PhaC">
    <location>
        <begin position="1"/>
        <end position="492"/>
    </location>
</feature>
<feature type="domain" description="AB hydrolase-1" evidence="2">
    <location>
        <begin position="70"/>
        <end position="336"/>
    </location>
</feature>
<feature type="region of interest" description="Disordered" evidence="3">
    <location>
        <begin position="359"/>
        <end position="443"/>
    </location>
</feature>
<feature type="compositionally biased region" description="Acidic residues" evidence="3">
    <location>
        <begin position="362"/>
        <end position="371"/>
    </location>
</feature>
<feature type="compositionally biased region" description="Acidic residues" evidence="3">
    <location>
        <begin position="379"/>
        <end position="388"/>
    </location>
</feature>
<feature type="active site" description="Charge relay system" evidence="2">
    <location>
        <position position="150"/>
    </location>
</feature>
<feature type="active site" description="Charge relay system" evidence="2">
    <location>
        <position position="305"/>
    </location>
</feature>
<feature type="active site" description="Charge relay system" evidence="2">
    <location>
        <position position="334"/>
    </location>
</feature>
<sequence>MTPVTFALDLQRRQWEQAAELVDRTSAASDRAETVSEVSVGKTPNEVVYKENKLRLLHYESKTETQYDVPILIVYALINRPYILDLQPDRSVVQTLLEQGFDVYLIDWGEPSRLDTHLTLDDYVTRYIDNCVDIVRDRSGQDSINLLGYCMGGTMSVMYAALFPEKVRNLGLMAAGLVFDDTGGVLERWGDEQYYSPKAVTDAFGNVPSEFLDVGFALMDPVENFVTKYVRLFENVENESFVENFSRMEQWLSDGIDVAGETYKQFLEDVYQQNKLAQNELMLDGKQVDLERLEMPILQIVGEYDHLIPPEASKPFNDLVPSEDTEVIEGATGHIGLSVSSRSHGDLWPAVSDWFAERSETGTDETPDSETEETRPDSQAEETDETPDEGLKPQAAASNETVAEEPEPQVVESNETTEEELEPQAVEANETAPEELESIDGIGPTYAERLASVGITSVSGLAAADPSEIAATIDVPVSRVTAWVEQASDRTD</sequence>